<name>PURA_BACHK</name>
<accession>Q6HAG9</accession>
<comment type="function">
    <text evidence="1">Plays an important role in the de novo pathway of purine nucleotide biosynthesis. Catalyzes the first committed step in the biosynthesis of AMP from IMP.</text>
</comment>
<comment type="catalytic activity">
    <reaction evidence="1">
        <text>IMP + L-aspartate + GTP = N(6)-(1,2-dicarboxyethyl)-AMP + GDP + phosphate + 2 H(+)</text>
        <dbReference type="Rhea" id="RHEA:15753"/>
        <dbReference type="ChEBI" id="CHEBI:15378"/>
        <dbReference type="ChEBI" id="CHEBI:29991"/>
        <dbReference type="ChEBI" id="CHEBI:37565"/>
        <dbReference type="ChEBI" id="CHEBI:43474"/>
        <dbReference type="ChEBI" id="CHEBI:57567"/>
        <dbReference type="ChEBI" id="CHEBI:58053"/>
        <dbReference type="ChEBI" id="CHEBI:58189"/>
        <dbReference type="EC" id="6.3.4.4"/>
    </reaction>
</comment>
<comment type="cofactor">
    <cofactor evidence="1">
        <name>Mg(2+)</name>
        <dbReference type="ChEBI" id="CHEBI:18420"/>
    </cofactor>
    <text evidence="1">Binds 1 Mg(2+) ion per subunit.</text>
</comment>
<comment type="pathway">
    <text evidence="1">Purine metabolism; AMP biosynthesis via de novo pathway; AMP from IMP: step 1/2.</text>
</comment>
<comment type="subunit">
    <text evidence="1">Homodimer.</text>
</comment>
<comment type="subcellular location">
    <subcellularLocation>
        <location evidence="1">Cytoplasm</location>
    </subcellularLocation>
</comment>
<comment type="similarity">
    <text evidence="1">Belongs to the adenylosuccinate synthetase family.</text>
</comment>
<proteinExistence type="inferred from homology"/>
<organism>
    <name type="scientific">Bacillus thuringiensis subsp. konkukian (strain 97-27)</name>
    <dbReference type="NCBI Taxonomy" id="281309"/>
    <lineage>
        <taxon>Bacteria</taxon>
        <taxon>Bacillati</taxon>
        <taxon>Bacillota</taxon>
        <taxon>Bacilli</taxon>
        <taxon>Bacillales</taxon>
        <taxon>Bacillaceae</taxon>
        <taxon>Bacillus</taxon>
        <taxon>Bacillus cereus group</taxon>
    </lineage>
</organism>
<feature type="chain" id="PRO_0000224254" description="Adenylosuccinate synthetase">
    <location>
        <begin position="1"/>
        <end position="429"/>
    </location>
</feature>
<feature type="active site" description="Proton acceptor" evidence="1">
    <location>
        <position position="13"/>
    </location>
</feature>
<feature type="active site" description="Proton donor" evidence="1">
    <location>
        <position position="41"/>
    </location>
</feature>
<feature type="binding site" evidence="1">
    <location>
        <begin position="12"/>
        <end position="18"/>
    </location>
    <ligand>
        <name>GTP</name>
        <dbReference type="ChEBI" id="CHEBI:37565"/>
    </ligand>
</feature>
<feature type="binding site" description="in other chain" evidence="1">
    <location>
        <begin position="13"/>
        <end position="16"/>
    </location>
    <ligand>
        <name>IMP</name>
        <dbReference type="ChEBI" id="CHEBI:58053"/>
        <note>ligand shared between dimeric partners</note>
    </ligand>
</feature>
<feature type="binding site" evidence="1">
    <location>
        <position position="13"/>
    </location>
    <ligand>
        <name>Mg(2+)</name>
        <dbReference type="ChEBI" id="CHEBI:18420"/>
    </ligand>
</feature>
<feature type="binding site" description="in other chain" evidence="1">
    <location>
        <begin position="38"/>
        <end position="41"/>
    </location>
    <ligand>
        <name>IMP</name>
        <dbReference type="ChEBI" id="CHEBI:58053"/>
        <note>ligand shared between dimeric partners</note>
    </ligand>
</feature>
<feature type="binding site" evidence="1">
    <location>
        <begin position="40"/>
        <end position="42"/>
    </location>
    <ligand>
        <name>GTP</name>
        <dbReference type="ChEBI" id="CHEBI:37565"/>
    </ligand>
</feature>
<feature type="binding site" evidence="1">
    <location>
        <position position="40"/>
    </location>
    <ligand>
        <name>Mg(2+)</name>
        <dbReference type="ChEBI" id="CHEBI:18420"/>
    </ligand>
</feature>
<feature type="binding site" description="in other chain" evidence="1">
    <location>
        <position position="128"/>
    </location>
    <ligand>
        <name>IMP</name>
        <dbReference type="ChEBI" id="CHEBI:58053"/>
        <note>ligand shared between dimeric partners</note>
    </ligand>
</feature>
<feature type="binding site" evidence="1">
    <location>
        <position position="142"/>
    </location>
    <ligand>
        <name>IMP</name>
        <dbReference type="ChEBI" id="CHEBI:58053"/>
        <note>ligand shared between dimeric partners</note>
    </ligand>
</feature>
<feature type="binding site" description="in other chain" evidence="1">
    <location>
        <position position="223"/>
    </location>
    <ligand>
        <name>IMP</name>
        <dbReference type="ChEBI" id="CHEBI:58053"/>
        <note>ligand shared between dimeric partners</note>
    </ligand>
</feature>
<feature type="binding site" description="in other chain" evidence="1">
    <location>
        <position position="238"/>
    </location>
    <ligand>
        <name>IMP</name>
        <dbReference type="ChEBI" id="CHEBI:58053"/>
        <note>ligand shared between dimeric partners</note>
    </ligand>
</feature>
<feature type="binding site" evidence="1">
    <location>
        <begin position="298"/>
        <end position="304"/>
    </location>
    <ligand>
        <name>substrate</name>
    </ligand>
</feature>
<feature type="binding site" description="in other chain" evidence="1">
    <location>
        <position position="302"/>
    </location>
    <ligand>
        <name>IMP</name>
        <dbReference type="ChEBI" id="CHEBI:58053"/>
        <note>ligand shared between dimeric partners</note>
    </ligand>
</feature>
<feature type="binding site" evidence="1">
    <location>
        <position position="304"/>
    </location>
    <ligand>
        <name>GTP</name>
        <dbReference type="ChEBI" id="CHEBI:37565"/>
    </ligand>
</feature>
<feature type="binding site" evidence="1">
    <location>
        <begin position="330"/>
        <end position="332"/>
    </location>
    <ligand>
        <name>GTP</name>
        <dbReference type="ChEBI" id="CHEBI:37565"/>
    </ligand>
</feature>
<feature type="binding site" evidence="1">
    <location>
        <begin position="412"/>
        <end position="414"/>
    </location>
    <ligand>
        <name>GTP</name>
        <dbReference type="ChEBI" id="CHEBI:37565"/>
    </ligand>
</feature>
<protein>
    <recommendedName>
        <fullName evidence="1">Adenylosuccinate synthetase</fullName>
        <shortName evidence="1">AMPSase</shortName>
        <shortName evidence="1">AdSS</shortName>
        <ecNumber evidence="1">6.3.4.4</ecNumber>
    </recommendedName>
    <alternativeName>
        <fullName evidence="1">IMP--aspartate ligase</fullName>
    </alternativeName>
</protein>
<keyword id="KW-0963">Cytoplasm</keyword>
<keyword id="KW-0342">GTP-binding</keyword>
<keyword id="KW-0436">Ligase</keyword>
<keyword id="KW-0460">Magnesium</keyword>
<keyword id="KW-0479">Metal-binding</keyword>
<keyword id="KW-0547">Nucleotide-binding</keyword>
<keyword id="KW-0658">Purine biosynthesis</keyword>
<gene>
    <name evidence="1" type="primary">purA</name>
    <name type="ordered locus">BT9727_5148</name>
</gene>
<evidence type="ECO:0000255" key="1">
    <source>
        <dbReference type="HAMAP-Rule" id="MF_00011"/>
    </source>
</evidence>
<dbReference type="EC" id="6.3.4.4" evidence="1"/>
<dbReference type="EMBL" id="AE017355">
    <property type="protein sequence ID" value="AAT63408.1"/>
    <property type="molecule type" value="Genomic_DNA"/>
</dbReference>
<dbReference type="RefSeq" id="WP_000100223.1">
    <property type="nucleotide sequence ID" value="NC_005957.1"/>
</dbReference>
<dbReference type="RefSeq" id="YP_039457.1">
    <property type="nucleotide sequence ID" value="NC_005957.1"/>
</dbReference>
<dbReference type="SMR" id="Q6HAG9"/>
<dbReference type="KEGG" id="btk:BT9727_5148"/>
<dbReference type="PATRIC" id="fig|281309.8.peg.5473"/>
<dbReference type="HOGENOM" id="CLU_029848_0_0_9"/>
<dbReference type="UniPathway" id="UPA00075">
    <property type="reaction ID" value="UER00335"/>
</dbReference>
<dbReference type="Proteomes" id="UP000001301">
    <property type="component" value="Chromosome"/>
</dbReference>
<dbReference type="GO" id="GO:0005737">
    <property type="term" value="C:cytoplasm"/>
    <property type="evidence" value="ECO:0007669"/>
    <property type="project" value="UniProtKB-SubCell"/>
</dbReference>
<dbReference type="GO" id="GO:0004019">
    <property type="term" value="F:adenylosuccinate synthase activity"/>
    <property type="evidence" value="ECO:0007669"/>
    <property type="project" value="UniProtKB-UniRule"/>
</dbReference>
<dbReference type="GO" id="GO:0005525">
    <property type="term" value="F:GTP binding"/>
    <property type="evidence" value="ECO:0007669"/>
    <property type="project" value="UniProtKB-UniRule"/>
</dbReference>
<dbReference type="GO" id="GO:0000287">
    <property type="term" value="F:magnesium ion binding"/>
    <property type="evidence" value="ECO:0007669"/>
    <property type="project" value="UniProtKB-UniRule"/>
</dbReference>
<dbReference type="GO" id="GO:0044208">
    <property type="term" value="P:'de novo' AMP biosynthetic process"/>
    <property type="evidence" value="ECO:0007669"/>
    <property type="project" value="UniProtKB-UniRule"/>
</dbReference>
<dbReference type="GO" id="GO:0046040">
    <property type="term" value="P:IMP metabolic process"/>
    <property type="evidence" value="ECO:0007669"/>
    <property type="project" value="TreeGrafter"/>
</dbReference>
<dbReference type="CDD" id="cd03108">
    <property type="entry name" value="AdSS"/>
    <property type="match status" value="1"/>
</dbReference>
<dbReference type="FunFam" id="1.10.300.10:FF:000001">
    <property type="entry name" value="Adenylosuccinate synthetase"/>
    <property type="match status" value="1"/>
</dbReference>
<dbReference type="FunFam" id="3.90.170.10:FF:000001">
    <property type="entry name" value="Adenylosuccinate synthetase"/>
    <property type="match status" value="1"/>
</dbReference>
<dbReference type="Gene3D" id="3.40.440.10">
    <property type="entry name" value="Adenylosuccinate Synthetase, subunit A, domain 1"/>
    <property type="match status" value="1"/>
</dbReference>
<dbReference type="Gene3D" id="1.10.300.10">
    <property type="entry name" value="Adenylosuccinate Synthetase, subunit A, domain 2"/>
    <property type="match status" value="1"/>
</dbReference>
<dbReference type="Gene3D" id="3.90.170.10">
    <property type="entry name" value="Adenylosuccinate Synthetase, subunit A, domain 3"/>
    <property type="match status" value="1"/>
</dbReference>
<dbReference type="HAMAP" id="MF_00011">
    <property type="entry name" value="Adenylosucc_synth"/>
    <property type="match status" value="1"/>
</dbReference>
<dbReference type="InterPro" id="IPR018220">
    <property type="entry name" value="Adenylosuccin_syn_GTP-bd"/>
</dbReference>
<dbReference type="InterPro" id="IPR033128">
    <property type="entry name" value="Adenylosuccin_syn_Lys_AS"/>
</dbReference>
<dbReference type="InterPro" id="IPR042109">
    <property type="entry name" value="Adenylosuccinate_synth_dom1"/>
</dbReference>
<dbReference type="InterPro" id="IPR042110">
    <property type="entry name" value="Adenylosuccinate_synth_dom2"/>
</dbReference>
<dbReference type="InterPro" id="IPR042111">
    <property type="entry name" value="Adenylosuccinate_synth_dom3"/>
</dbReference>
<dbReference type="InterPro" id="IPR001114">
    <property type="entry name" value="Adenylosuccinate_synthetase"/>
</dbReference>
<dbReference type="InterPro" id="IPR027417">
    <property type="entry name" value="P-loop_NTPase"/>
</dbReference>
<dbReference type="NCBIfam" id="NF002223">
    <property type="entry name" value="PRK01117.1"/>
    <property type="match status" value="1"/>
</dbReference>
<dbReference type="NCBIfam" id="TIGR00184">
    <property type="entry name" value="purA"/>
    <property type="match status" value="1"/>
</dbReference>
<dbReference type="PANTHER" id="PTHR11846">
    <property type="entry name" value="ADENYLOSUCCINATE SYNTHETASE"/>
    <property type="match status" value="1"/>
</dbReference>
<dbReference type="PANTHER" id="PTHR11846:SF0">
    <property type="entry name" value="ADENYLOSUCCINATE SYNTHETASE"/>
    <property type="match status" value="1"/>
</dbReference>
<dbReference type="Pfam" id="PF00709">
    <property type="entry name" value="Adenylsucc_synt"/>
    <property type="match status" value="1"/>
</dbReference>
<dbReference type="SMART" id="SM00788">
    <property type="entry name" value="Adenylsucc_synt"/>
    <property type="match status" value="1"/>
</dbReference>
<dbReference type="SUPFAM" id="SSF52540">
    <property type="entry name" value="P-loop containing nucleoside triphosphate hydrolases"/>
    <property type="match status" value="1"/>
</dbReference>
<dbReference type="PROSITE" id="PS01266">
    <property type="entry name" value="ADENYLOSUCCIN_SYN_1"/>
    <property type="match status" value="1"/>
</dbReference>
<dbReference type="PROSITE" id="PS00513">
    <property type="entry name" value="ADENYLOSUCCIN_SYN_2"/>
    <property type="match status" value="1"/>
</dbReference>
<reference key="1">
    <citation type="journal article" date="2006" name="J. Bacteriol.">
        <title>Pathogenomic sequence analysis of Bacillus cereus and Bacillus thuringiensis isolates closely related to Bacillus anthracis.</title>
        <authorList>
            <person name="Han C.S."/>
            <person name="Xie G."/>
            <person name="Challacombe J.F."/>
            <person name="Altherr M.R."/>
            <person name="Bhotika S.S."/>
            <person name="Bruce D."/>
            <person name="Campbell C.S."/>
            <person name="Campbell M.L."/>
            <person name="Chen J."/>
            <person name="Chertkov O."/>
            <person name="Cleland C."/>
            <person name="Dimitrijevic M."/>
            <person name="Doggett N.A."/>
            <person name="Fawcett J.J."/>
            <person name="Glavina T."/>
            <person name="Goodwin L.A."/>
            <person name="Hill K.K."/>
            <person name="Hitchcock P."/>
            <person name="Jackson P.J."/>
            <person name="Keim P."/>
            <person name="Kewalramani A.R."/>
            <person name="Longmire J."/>
            <person name="Lucas S."/>
            <person name="Malfatti S."/>
            <person name="McMurry K."/>
            <person name="Meincke L.J."/>
            <person name="Misra M."/>
            <person name="Moseman B.L."/>
            <person name="Mundt M."/>
            <person name="Munk A.C."/>
            <person name="Okinaka R.T."/>
            <person name="Parson-Quintana B."/>
            <person name="Reilly L.P."/>
            <person name="Richardson P."/>
            <person name="Robinson D.L."/>
            <person name="Rubin E."/>
            <person name="Saunders E."/>
            <person name="Tapia R."/>
            <person name="Tesmer J.G."/>
            <person name="Thayer N."/>
            <person name="Thompson L.S."/>
            <person name="Tice H."/>
            <person name="Ticknor L.O."/>
            <person name="Wills P.L."/>
            <person name="Brettin T.S."/>
            <person name="Gilna P."/>
        </authorList>
    </citation>
    <scope>NUCLEOTIDE SEQUENCE [LARGE SCALE GENOMIC DNA]</scope>
    <source>
        <strain>97-27</strain>
    </source>
</reference>
<sequence length="429" mass="47424">MSSVVVVGTQWGDEGKGKITDFLSEHAEVVARYQGGNNAGHTIVFGGVKYKLHLIPSGIFYKEKICVIGNGLVVDPKALLEELKYLHDRGVSTDNLRVSNRAHVILPYHLKQDELEEASKGDNKIGTTKKGIGPAYMDKAARIGIRMADLLDREAFKEKLEQNLAQKNRLFEKMYDTEGFSVDEIFEEYFEYGQQIAQYVCDTSVVLNDALDNNHRVLFEGAQGVMLDIDHGTYPFVTSSNPIAGGVTVGTGVGPAKVTRVVGVCKAYTSRVGDGPFPTELHDEIGHQIREVGREYGTTTGRPRRVGWFDSVVVRHARRVSGLTDLSLNSIDVLTGIPTLKICVAYKCDGKVIDEVPANLNILAKCEPVYEELPGWTEDITGVRSLDELPENARKYVERVSELTGIQLSMFSVGPDRNQTNIVRNVYEA</sequence>